<protein>
    <recommendedName>
        <fullName evidence="1">Ribulose bisphosphate carboxylase large chain</fullName>
        <shortName evidence="1">RuBisCO large subunit</shortName>
        <ecNumber evidence="1">4.1.1.39</ecNumber>
    </recommendedName>
</protein>
<dbReference type="EC" id="4.1.1.39" evidence="1"/>
<dbReference type="EMBL" id="Z70057">
    <property type="protein sequence ID" value="CAA93916.1"/>
    <property type="molecule type" value="Genomic_DNA"/>
</dbReference>
<dbReference type="SMR" id="P69586"/>
<dbReference type="GO" id="GO:0009507">
    <property type="term" value="C:chloroplast"/>
    <property type="evidence" value="ECO:0007669"/>
    <property type="project" value="UniProtKB-SubCell"/>
</dbReference>
<dbReference type="GO" id="GO:0000287">
    <property type="term" value="F:magnesium ion binding"/>
    <property type="evidence" value="ECO:0007669"/>
    <property type="project" value="InterPro"/>
</dbReference>
<dbReference type="GO" id="GO:0004497">
    <property type="term" value="F:monooxygenase activity"/>
    <property type="evidence" value="ECO:0007669"/>
    <property type="project" value="UniProtKB-KW"/>
</dbReference>
<dbReference type="GO" id="GO:0016984">
    <property type="term" value="F:ribulose-bisphosphate carboxylase activity"/>
    <property type="evidence" value="ECO:0007669"/>
    <property type="project" value="UniProtKB-EC"/>
</dbReference>
<dbReference type="GO" id="GO:0009853">
    <property type="term" value="P:photorespiration"/>
    <property type="evidence" value="ECO:0007669"/>
    <property type="project" value="UniProtKB-KW"/>
</dbReference>
<dbReference type="GO" id="GO:0019253">
    <property type="term" value="P:reductive pentose-phosphate cycle"/>
    <property type="evidence" value="ECO:0007669"/>
    <property type="project" value="UniProtKB-KW"/>
</dbReference>
<dbReference type="CDD" id="cd08212">
    <property type="entry name" value="RuBisCO_large_I"/>
    <property type="match status" value="1"/>
</dbReference>
<dbReference type="FunFam" id="3.20.20.110:FF:000001">
    <property type="entry name" value="Ribulose bisphosphate carboxylase large chain"/>
    <property type="match status" value="1"/>
</dbReference>
<dbReference type="FunFam" id="3.30.70.150:FF:000001">
    <property type="entry name" value="Ribulose bisphosphate carboxylase large chain"/>
    <property type="match status" value="1"/>
</dbReference>
<dbReference type="Gene3D" id="3.20.20.110">
    <property type="entry name" value="Ribulose bisphosphate carboxylase, large subunit, C-terminal domain"/>
    <property type="match status" value="1"/>
</dbReference>
<dbReference type="Gene3D" id="3.30.70.150">
    <property type="entry name" value="RuBisCO large subunit, N-terminal domain"/>
    <property type="match status" value="1"/>
</dbReference>
<dbReference type="HAMAP" id="MF_01338">
    <property type="entry name" value="RuBisCO_L_type1"/>
    <property type="match status" value="1"/>
</dbReference>
<dbReference type="InterPro" id="IPR033966">
    <property type="entry name" value="RuBisCO"/>
</dbReference>
<dbReference type="InterPro" id="IPR020878">
    <property type="entry name" value="RuBisCo_large_chain_AS"/>
</dbReference>
<dbReference type="InterPro" id="IPR000685">
    <property type="entry name" value="RuBisCO_lsu_C"/>
</dbReference>
<dbReference type="InterPro" id="IPR036376">
    <property type="entry name" value="RuBisCO_lsu_C_sf"/>
</dbReference>
<dbReference type="InterPro" id="IPR017443">
    <property type="entry name" value="RuBisCO_lsu_fd_N"/>
</dbReference>
<dbReference type="InterPro" id="IPR036422">
    <property type="entry name" value="RuBisCO_lsu_N_sf"/>
</dbReference>
<dbReference type="InterPro" id="IPR020888">
    <property type="entry name" value="RuBisCO_lsuI"/>
</dbReference>
<dbReference type="NCBIfam" id="NF003252">
    <property type="entry name" value="PRK04208.1"/>
    <property type="match status" value="1"/>
</dbReference>
<dbReference type="PANTHER" id="PTHR42704">
    <property type="entry name" value="RIBULOSE BISPHOSPHATE CARBOXYLASE"/>
    <property type="match status" value="1"/>
</dbReference>
<dbReference type="PANTHER" id="PTHR42704:SF16">
    <property type="entry name" value="RIBULOSE BISPHOSPHATE CARBOXYLASE LARGE CHAIN"/>
    <property type="match status" value="1"/>
</dbReference>
<dbReference type="Pfam" id="PF00016">
    <property type="entry name" value="RuBisCO_large"/>
    <property type="match status" value="1"/>
</dbReference>
<dbReference type="Pfam" id="PF02788">
    <property type="entry name" value="RuBisCO_large_N"/>
    <property type="match status" value="1"/>
</dbReference>
<dbReference type="SFLD" id="SFLDG01052">
    <property type="entry name" value="RuBisCO"/>
    <property type="match status" value="1"/>
</dbReference>
<dbReference type="SFLD" id="SFLDS00014">
    <property type="entry name" value="RuBisCO"/>
    <property type="match status" value="1"/>
</dbReference>
<dbReference type="SFLD" id="SFLDG00301">
    <property type="entry name" value="RuBisCO-like_proteins"/>
    <property type="match status" value="1"/>
</dbReference>
<dbReference type="SUPFAM" id="SSF51649">
    <property type="entry name" value="RuBisCo, C-terminal domain"/>
    <property type="match status" value="1"/>
</dbReference>
<dbReference type="SUPFAM" id="SSF54966">
    <property type="entry name" value="RuBisCO, large subunit, small (N-terminal) domain"/>
    <property type="match status" value="1"/>
</dbReference>
<dbReference type="PROSITE" id="PS00157">
    <property type="entry name" value="RUBISCO_LARGE"/>
    <property type="match status" value="1"/>
</dbReference>
<comment type="function">
    <text evidence="1">RuBisCO catalyzes two reactions: the carboxylation of D-ribulose 1,5-bisphosphate, the primary event in carbon dioxide fixation, as well as the oxidative fragmentation of the pentose substrate in the photorespiration process. Both reactions occur simultaneously and in competition at the same active site.</text>
</comment>
<comment type="catalytic activity">
    <reaction evidence="1">
        <text>2 (2R)-3-phosphoglycerate + 2 H(+) = D-ribulose 1,5-bisphosphate + CO2 + H2O</text>
        <dbReference type="Rhea" id="RHEA:23124"/>
        <dbReference type="ChEBI" id="CHEBI:15377"/>
        <dbReference type="ChEBI" id="CHEBI:15378"/>
        <dbReference type="ChEBI" id="CHEBI:16526"/>
        <dbReference type="ChEBI" id="CHEBI:57870"/>
        <dbReference type="ChEBI" id="CHEBI:58272"/>
        <dbReference type="EC" id="4.1.1.39"/>
    </reaction>
</comment>
<comment type="catalytic activity">
    <reaction evidence="1">
        <text>D-ribulose 1,5-bisphosphate + O2 = 2-phosphoglycolate + (2R)-3-phosphoglycerate + 2 H(+)</text>
        <dbReference type="Rhea" id="RHEA:36631"/>
        <dbReference type="ChEBI" id="CHEBI:15378"/>
        <dbReference type="ChEBI" id="CHEBI:15379"/>
        <dbReference type="ChEBI" id="CHEBI:57870"/>
        <dbReference type="ChEBI" id="CHEBI:58033"/>
        <dbReference type="ChEBI" id="CHEBI:58272"/>
    </reaction>
</comment>
<comment type="cofactor">
    <cofactor evidence="1">
        <name>Mg(2+)</name>
        <dbReference type="ChEBI" id="CHEBI:18420"/>
    </cofactor>
    <text evidence="1">Binds 1 Mg(2+) ion per subunit.</text>
</comment>
<comment type="subunit">
    <text evidence="1">Heterohexadecamer of 8 large chains and 8 small chains; disulfide-linked. The disulfide link is formed within the large subunit homodimers.</text>
</comment>
<comment type="subcellular location">
    <subcellularLocation>
        <location>Plastid</location>
        <location>Chloroplast</location>
    </subcellularLocation>
</comment>
<comment type="PTM">
    <text evidence="1">The disulfide bond which can form in the large chain dimeric partners within the hexadecamer appears to be associated with oxidative stress and protein turnover.</text>
</comment>
<comment type="miscellaneous">
    <text evidence="1">The basic functional RuBisCO is composed of a large chain homodimer in a 'head-to-tail' conformation. In form I RuBisCO this homodimer is arranged in a barrel-like tetramer with the small subunits forming a tetrameric 'cap' on each end of the 'barrel'.</text>
</comment>
<comment type="similarity">
    <text evidence="1">Belongs to the RuBisCO large chain family. Type I subfamily.</text>
</comment>
<organism>
    <name type="scientific">Lupinus nootkatensis</name>
    <name type="common">Nootka lupine</name>
    <dbReference type="NCBI Taxonomy" id="53234"/>
    <lineage>
        <taxon>Eukaryota</taxon>
        <taxon>Viridiplantae</taxon>
        <taxon>Streptophyta</taxon>
        <taxon>Embryophyta</taxon>
        <taxon>Tracheophyta</taxon>
        <taxon>Spermatophyta</taxon>
        <taxon>Magnoliopsida</taxon>
        <taxon>eudicotyledons</taxon>
        <taxon>Gunneridae</taxon>
        <taxon>Pentapetalae</taxon>
        <taxon>rosids</taxon>
        <taxon>fabids</taxon>
        <taxon>Fabales</taxon>
        <taxon>Fabaceae</taxon>
        <taxon>Papilionoideae</taxon>
        <taxon>50 kb inversion clade</taxon>
        <taxon>genistoids sensu lato</taxon>
        <taxon>core genistoids</taxon>
        <taxon>Genisteae</taxon>
        <taxon>Lupinus</taxon>
    </lineage>
</organism>
<keyword id="KW-0113">Calvin cycle</keyword>
<keyword id="KW-0120">Carbon dioxide fixation</keyword>
<keyword id="KW-0150">Chloroplast</keyword>
<keyword id="KW-1015">Disulfide bond</keyword>
<keyword id="KW-0456">Lyase</keyword>
<keyword id="KW-0460">Magnesium</keyword>
<keyword id="KW-0479">Metal-binding</keyword>
<keyword id="KW-0488">Methylation</keyword>
<keyword id="KW-0503">Monooxygenase</keyword>
<keyword id="KW-0560">Oxidoreductase</keyword>
<keyword id="KW-0601">Photorespiration</keyword>
<keyword id="KW-0602">Photosynthesis</keyword>
<keyword id="KW-0934">Plastid</keyword>
<evidence type="ECO:0000255" key="1">
    <source>
        <dbReference type="HAMAP-Rule" id="MF_01338"/>
    </source>
</evidence>
<accession>P69586</accession>
<accession>P52775</accession>
<reference key="1">
    <citation type="journal article" date="1995" name="Bot. Acta">
        <title>Molecular phylogeny of the Papilionoideae (family Leguminosae): rbcL sequences versus chemical taxonomy.</title>
        <authorList>
            <person name="Kaess E."/>
            <person name="Wink M."/>
        </authorList>
    </citation>
    <scope>NUCLEOTIDE SEQUENCE [GENOMIC DNA]</scope>
    <source>
        <tissue>Leaf</tissue>
    </source>
</reference>
<feature type="chain" id="PRO_0000062523" description="Ribulose bisphosphate carboxylase large chain">
    <location>
        <begin position="1" status="less than"/>
        <end position="455" status="greater than"/>
    </location>
</feature>
<feature type="active site" description="Proton acceptor" evidence="1">
    <location>
        <position position="166"/>
    </location>
</feature>
<feature type="active site" description="Proton acceptor" evidence="1">
    <location>
        <position position="285"/>
    </location>
</feature>
<feature type="binding site" description="in homodimeric partner" evidence="1">
    <location>
        <position position="114"/>
    </location>
    <ligand>
        <name>substrate</name>
    </ligand>
</feature>
<feature type="binding site" evidence="1">
    <location>
        <position position="164"/>
    </location>
    <ligand>
        <name>substrate</name>
    </ligand>
</feature>
<feature type="binding site" evidence="1">
    <location>
        <position position="168"/>
    </location>
    <ligand>
        <name>substrate</name>
    </ligand>
</feature>
<feature type="binding site" description="via carbamate group" evidence="1">
    <location>
        <position position="192"/>
    </location>
    <ligand>
        <name>Mg(2+)</name>
        <dbReference type="ChEBI" id="CHEBI:18420"/>
    </ligand>
</feature>
<feature type="binding site" evidence="1">
    <location>
        <position position="194"/>
    </location>
    <ligand>
        <name>Mg(2+)</name>
        <dbReference type="ChEBI" id="CHEBI:18420"/>
    </ligand>
</feature>
<feature type="binding site" evidence="1">
    <location>
        <position position="195"/>
    </location>
    <ligand>
        <name>Mg(2+)</name>
        <dbReference type="ChEBI" id="CHEBI:18420"/>
    </ligand>
</feature>
<feature type="binding site" evidence="1">
    <location>
        <position position="286"/>
    </location>
    <ligand>
        <name>substrate</name>
    </ligand>
</feature>
<feature type="binding site" evidence="1">
    <location>
        <position position="318"/>
    </location>
    <ligand>
        <name>substrate</name>
    </ligand>
</feature>
<feature type="binding site" evidence="1">
    <location>
        <position position="370"/>
    </location>
    <ligand>
        <name>substrate</name>
    </ligand>
</feature>
<feature type="site" description="Transition state stabilizer" evidence="1">
    <location>
        <position position="325"/>
    </location>
</feature>
<feature type="modified residue" description="N6,N6,N6-trimethyllysine" evidence="1">
    <location>
        <position position="5"/>
    </location>
</feature>
<feature type="modified residue" description="N6-carboxylysine" evidence="1">
    <location>
        <position position="192"/>
    </location>
</feature>
<feature type="disulfide bond" description="Interchain; in linked form" evidence="1">
    <location>
        <position position="238"/>
    </location>
</feature>
<feature type="non-terminal residue">
    <location>
        <position position="1"/>
    </location>
</feature>
<feature type="non-terminal residue">
    <location>
        <position position="455"/>
    </location>
</feature>
<name>RBL_LUPNO</name>
<gene>
    <name evidence="1" type="primary">rbcL</name>
</gene>
<sequence length="455" mass="50317">SVGFKAGVKDYKLTYYTPDYKTKDTDILAAFRVTPQPGVPPEEAGAAVAAESSTGTWTTVWTDGLTSLDRYKGRCYHIEPVAGEESQFIAYVAYPLDLFEEGSVTNMFTSIVGNVFGFKALRALRLEDLRIPNAYVKTFQGPPHGIQVERDKLNKYGRPLLGCTIKPKLGLSAKNYGRAVYECLRGGLDFTKDDENVNSQPFMRWRDRFLFCAEALYKAQAETGEIKGHYLNATAGTCEEMIKRAVFARELGVPIVMHDYLTGGFTANTTLSHYCRDNGLLLHIHRAMHAVIDRQKNHGMHFRVLAKALRLSGGDHIHSGTVVGKLEGEREITLGFVDLLRDDFVEKDRSRGIYFTQDWVSLPGVLPVASGGIHVWHMPALTEIFGDDSVLQFGGGTLGHPWGNAPGAVANRVALEACVQARNEGRDLASEGNQIIREASKWSPELAAACEVWKE</sequence>
<proteinExistence type="inferred from homology"/>
<geneLocation type="chloroplast"/>